<sequence length="249" mass="27643">MTENQTTPDPGEPGSSADRPGGLVPTGDSAEFVAGRSRKGMFGVRGTGDTSGYGGLRLPAYVPAPAERPYGGWFDEVADGLFLALRERGVPAESVLQVTVDRGEITFYVDRDHLLEICRSLRDDPALRFEMCASVSGVDYGPEVPQRLHSVYHLLSMTYRRRIRLEVALDVDDPHVPSVVEVYPTADYQERETYDMFGIVYDGHPALTRILMPDDWDGHPQRKDYPLGGIPVEYKGAEIPPPDQRRAYS</sequence>
<comment type="function">
    <text evidence="1">NDH-1 shuttles electrons from NADH, via FMN and iron-sulfur (Fe-S) centers, to quinones in the respiratory chain. The immediate electron acceptor for the enzyme in this species is believed to be a menaquinone. Couples the redox reaction to proton translocation (for every two electrons transferred, four hydrogen ions are translocated across the cytoplasmic membrane), and thus conserves the redox energy in a proton gradient.</text>
</comment>
<comment type="catalytic activity">
    <reaction evidence="1">
        <text>a quinone + NADH + 5 H(+)(in) = a quinol + NAD(+) + 4 H(+)(out)</text>
        <dbReference type="Rhea" id="RHEA:57888"/>
        <dbReference type="ChEBI" id="CHEBI:15378"/>
        <dbReference type="ChEBI" id="CHEBI:24646"/>
        <dbReference type="ChEBI" id="CHEBI:57540"/>
        <dbReference type="ChEBI" id="CHEBI:57945"/>
        <dbReference type="ChEBI" id="CHEBI:132124"/>
    </reaction>
</comment>
<comment type="subunit">
    <text evidence="1">NDH-1 is composed of 14 different subunits. Subunits NuoB, C, D, E, F, and G constitute the peripheral sector of the complex.</text>
</comment>
<comment type="subcellular location">
    <subcellularLocation>
        <location evidence="1">Cell membrane</location>
        <topology evidence="1">Peripheral membrane protein</topology>
        <orientation evidence="1">Cytoplasmic side</orientation>
    </subcellularLocation>
</comment>
<comment type="similarity">
    <text evidence="1">Belongs to the complex I 30 kDa subunit family.</text>
</comment>
<feature type="chain" id="PRO_0000358195" description="NADH-quinone oxidoreductase subunit C">
    <location>
        <begin position="1"/>
        <end position="249"/>
    </location>
</feature>
<feature type="region of interest" description="Disordered" evidence="2">
    <location>
        <begin position="1"/>
        <end position="29"/>
    </location>
</feature>
<reference key="1">
    <citation type="journal article" date="2007" name="Nat. Biotechnol.">
        <title>Complete genome sequence of the erythromycin-producing bacterium Saccharopolyspora erythraea NRRL23338.</title>
        <authorList>
            <person name="Oliynyk M."/>
            <person name="Samborskyy M."/>
            <person name="Lester J.B."/>
            <person name="Mironenko T."/>
            <person name="Scott N."/>
            <person name="Dickens S."/>
            <person name="Haydock S.F."/>
            <person name="Leadlay P.F."/>
        </authorList>
    </citation>
    <scope>NUCLEOTIDE SEQUENCE [LARGE SCALE GENOMIC DNA]</scope>
    <source>
        <strain>ATCC 11635 / DSM 40517 / JCM 4748 / NBRC 13426 / NCIMB 8594 / NRRL 2338</strain>
    </source>
</reference>
<protein>
    <recommendedName>
        <fullName evidence="1">NADH-quinone oxidoreductase subunit C</fullName>
        <ecNumber evidence="1">7.1.1.-</ecNumber>
    </recommendedName>
    <alternativeName>
        <fullName evidence="1">NADH dehydrogenase I subunit C</fullName>
    </alternativeName>
    <alternativeName>
        <fullName evidence="1">NDH-1 subunit C</fullName>
    </alternativeName>
</protein>
<dbReference type="EC" id="7.1.1.-" evidence="1"/>
<dbReference type="EMBL" id="AM420293">
    <property type="protein sequence ID" value="CAM06064.1"/>
    <property type="molecule type" value="Genomic_DNA"/>
</dbReference>
<dbReference type="RefSeq" id="WP_011875189.1">
    <property type="nucleotide sequence ID" value="NC_009142.1"/>
</dbReference>
<dbReference type="SMR" id="A4FPT9"/>
<dbReference type="STRING" id="405948.SACE_6900"/>
<dbReference type="KEGG" id="sen:SACE_6900"/>
<dbReference type="eggNOG" id="COG0852">
    <property type="taxonomic scope" value="Bacteria"/>
</dbReference>
<dbReference type="HOGENOM" id="CLU_042628_4_0_11"/>
<dbReference type="OrthoDB" id="9803286at2"/>
<dbReference type="Proteomes" id="UP000006728">
    <property type="component" value="Chromosome"/>
</dbReference>
<dbReference type="GO" id="GO:0005886">
    <property type="term" value="C:plasma membrane"/>
    <property type="evidence" value="ECO:0007669"/>
    <property type="project" value="UniProtKB-SubCell"/>
</dbReference>
<dbReference type="GO" id="GO:0008137">
    <property type="term" value="F:NADH dehydrogenase (ubiquinone) activity"/>
    <property type="evidence" value="ECO:0007669"/>
    <property type="project" value="InterPro"/>
</dbReference>
<dbReference type="GO" id="GO:0050136">
    <property type="term" value="F:NADH:ubiquinone reductase (non-electrogenic) activity"/>
    <property type="evidence" value="ECO:0007669"/>
    <property type="project" value="UniProtKB-UniRule"/>
</dbReference>
<dbReference type="GO" id="GO:0048038">
    <property type="term" value="F:quinone binding"/>
    <property type="evidence" value="ECO:0007669"/>
    <property type="project" value="UniProtKB-KW"/>
</dbReference>
<dbReference type="Gene3D" id="3.30.460.80">
    <property type="entry name" value="NADH:ubiquinone oxidoreductase, 30kDa subunit"/>
    <property type="match status" value="1"/>
</dbReference>
<dbReference type="HAMAP" id="MF_01357">
    <property type="entry name" value="NDH1_NuoC"/>
    <property type="match status" value="1"/>
</dbReference>
<dbReference type="InterPro" id="IPR010218">
    <property type="entry name" value="NADH_DH_suC"/>
</dbReference>
<dbReference type="InterPro" id="IPR037232">
    <property type="entry name" value="NADH_quin_OxRdtase_su_C/D-like"/>
</dbReference>
<dbReference type="InterPro" id="IPR001268">
    <property type="entry name" value="NADH_UbQ_OxRdtase_30kDa_su"/>
</dbReference>
<dbReference type="NCBIfam" id="TIGR01961">
    <property type="entry name" value="NuoC_fam"/>
    <property type="match status" value="1"/>
</dbReference>
<dbReference type="NCBIfam" id="NF005856">
    <property type="entry name" value="PRK07785.1"/>
    <property type="match status" value="1"/>
</dbReference>
<dbReference type="PANTHER" id="PTHR10884:SF14">
    <property type="entry name" value="NADH DEHYDROGENASE [UBIQUINONE] IRON-SULFUR PROTEIN 3, MITOCHONDRIAL"/>
    <property type="match status" value="1"/>
</dbReference>
<dbReference type="PANTHER" id="PTHR10884">
    <property type="entry name" value="NADH DEHYDROGENASE UBIQUINONE IRON-SULFUR PROTEIN 3"/>
    <property type="match status" value="1"/>
</dbReference>
<dbReference type="Pfam" id="PF00329">
    <property type="entry name" value="Complex1_30kDa"/>
    <property type="match status" value="1"/>
</dbReference>
<dbReference type="SUPFAM" id="SSF143243">
    <property type="entry name" value="Nqo5-like"/>
    <property type="match status" value="1"/>
</dbReference>
<organism>
    <name type="scientific">Saccharopolyspora erythraea (strain ATCC 11635 / DSM 40517 / JCM 4748 / NBRC 13426 / NCIMB 8594 / NRRL 2338)</name>
    <dbReference type="NCBI Taxonomy" id="405948"/>
    <lineage>
        <taxon>Bacteria</taxon>
        <taxon>Bacillati</taxon>
        <taxon>Actinomycetota</taxon>
        <taxon>Actinomycetes</taxon>
        <taxon>Pseudonocardiales</taxon>
        <taxon>Pseudonocardiaceae</taxon>
        <taxon>Saccharopolyspora</taxon>
    </lineage>
</organism>
<keyword id="KW-1003">Cell membrane</keyword>
<keyword id="KW-0472">Membrane</keyword>
<keyword id="KW-0520">NAD</keyword>
<keyword id="KW-0874">Quinone</keyword>
<keyword id="KW-1185">Reference proteome</keyword>
<keyword id="KW-1278">Translocase</keyword>
<keyword id="KW-0813">Transport</keyword>
<name>NUOC_SACEN</name>
<proteinExistence type="inferred from homology"/>
<gene>
    <name evidence="1" type="primary">nuoC</name>
    <name type="ordered locus">SACE_6900</name>
</gene>
<evidence type="ECO:0000255" key="1">
    <source>
        <dbReference type="HAMAP-Rule" id="MF_01357"/>
    </source>
</evidence>
<evidence type="ECO:0000256" key="2">
    <source>
        <dbReference type="SAM" id="MobiDB-lite"/>
    </source>
</evidence>
<accession>A4FPT9</accession>